<name>METXA_THET8</name>
<organism>
    <name type="scientific">Thermus thermophilus (strain ATCC 27634 / DSM 579 / HB8)</name>
    <dbReference type="NCBI Taxonomy" id="300852"/>
    <lineage>
        <taxon>Bacteria</taxon>
        <taxon>Thermotogati</taxon>
        <taxon>Deinococcota</taxon>
        <taxon>Deinococci</taxon>
        <taxon>Thermales</taxon>
        <taxon>Thermaceae</taxon>
        <taxon>Thermus</taxon>
    </lineage>
</organism>
<comment type="function">
    <text evidence="1">Transfers an acetyl group from acetyl-CoA to L-homoserine, forming acetyl-L-homoserine.</text>
</comment>
<comment type="catalytic activity">
    <reaction evidence="1">
        <text>L-homoserine + acetyl-CoA = O-acetyl-L-homoserine + CoA</text>
        <dbReference type="Rhea" id="RHEA:13701"/>
        <dbReference type="ChEBI" id="CHEBI:57287"/>
        <dbReference type="ChEBI" id="CHEBI:57288"/>
        <dbReference type="ChEBI" id="CHEBI:57476"/>
        <dbReference type="ChEBI" id="CHEBI:57716"/>
        <dbReference type="EC" id="2.3.1.31"/>
    </reaction>
</comment>
<comment type="pathway">
    <text evidence="1">Amino-acid biosynthesis; L-methionine biosynthesis via de novo pathway; O-acetyl-L-homoserine from L-homoserine: step 1/1.</text>
</comment>
<comment type="subunit">
    <text evidence="1">Homodimer.</text>
</comment>
<comment type="subcellular location">
    <subcellularLocation>
        <location evidence="1">Cytoplasm</location>
    </subcellularLocation>
</comment>
<comment type="similarity">
    <text evidence="1">Belongs to the AB hydrolase superfamily. MetX family.</text>
</comment>
<proteinExistence type="inferred from homology"/>
<keyword id="KW-0012">Acyltransferase</keyword>
<keyword id="KW-0028">Amino-acid biosynthesis</keyword>
<keyword id="KW-0963">Cytoplasm</keyword>
<keyword id="KW-0486">Methionine biosynthesis</keyword>
<keyword id="KW-1185">Reference proteome</keyword>
<keyword id="KW-0808">Transferase</keyword>
<feature type="chain" id="PRO_0000155745" description="Homoserine O-acetyltransferase">
    <location>
        <begin position="1"/>
        <end position="380"/>
    </location>
</feature>
<feature type="domain" description="AB hydrolase-1" evidence="1">
    <location>
        <begin position="70"/>
        <end position="366"/>
    </location>
</feature>
<feature type="active site" description="Nucleophile" evidence="1">
    <location>
        <position position="186"/>
    </location>
</feature>
<feature type="active site" evidence="1">
    <location>
        <position position="333"/>
    </location>
</feature>
<feature type="active site" evidence="1">
    <location>
        <position position="361"/>
    </location>
</feature>
<feature type="binding site" evidence="1">
    <location>
        <position position="250"/>
    </location>
    <ligand>
        <name>substrate</name>
    </ligand>
</feature>
<feature type="binding site" evidence="1">
    <location>
        <position position="362"/>
    </location>
    <ligand>
        <name>substrate</name>
    </ligand>
</feature>
<gene>
    <name evidence="1" type="primary">metXA</name>
    <name type="ordered locus">TTHA0759</name>
</gene>
<dbReference type="EC" id="2.3.1.31" evidence="1"/>
<dbReference type="EMBL" id="AP008226">
    <property type="protein sequence ID" value="BAD70582.1"/>
    <property type="molecule type" value="Genomic_DNA"/>
</dbReference>
<dbReference type="RefSeq" id="YP_144025.1">
    <property type="nucleotide sequence ID" value="NC_006461.1"/>
</dbReference>
<dbReference type="SMR" id="Q5SK89"/>
<dbReference type="ESTHER" id="theth-metx">
    <property type="family name" value="Homoserine_transacetylase"/>
</dbReference>
<dbReference type="EnsemblBacteria" id="BAD70582">
    <property type="protein sequence ID" value="BAD70582"/>
    <property type="gene ID" value="BAD70582"/>
</dbReference>
<dbReference type="GeneID" id="3170105"/>
<dbReference type="KEGG" id="ttj:TTHA0759"/>
<dbReference type="PATRIC" id="fig|300852.9.peg.752"/>
<dbReference type="eggNOG" id="COG2021">
    <property type="taxonomic scope" value="Bacteria"/>
</dbReference>
<dbReference type="HOGENOM" id="CLU_028760_1_2_0"/>
<dbReference type="PhylomeDB" id="Q5SK89"/>
<dbReference type="UniPathway" id="UPA00051">
    <property type="reaction ID" value="UER00074"/>
</dbReference>
<dbReference type="Proteomes" id="UP000000532">
    <property type="component" value="Chromosome"/>
</dbReference>
<dbReference type="GO" id="GO:0005737">
    <property type="term" value="C:cytoplasm"/>
    <property type="evidence" value="ECO:0007669"/>
    <property type="project" value="UniProtKB-SubCell"/>
</dbReference>
<dbReference type="GO" id="GO:0004414">
    <property type="term" value="F:homoserine O-acetyltransferase activity"/>
    <property type="evidence" value="ECO:0007669"/>
    <property type="project" value="UniProtKB-UniRule"/>
</dbReference>
<dbReference type="GO" id="GO:0009092">
    <property type="term" value="P:homoserine metabolic process"/>
    <property type="evidence" value="ECO:0007669"/>
    <property type="project" value="TreeGrafter"/>
</dbReference>
<dbReference type="GO" id="GO:0009086">
    <property type="term" value="P:methionine biosynthetic process"/>
    <property type="evidence" value="ECO:0007669"/>
    <property type="project" value="UniProtKB-UniRule"/>
</dbReference>
<dbReference type="Gene3D" id="3.40.50.1820">
    <property type="entry name" value="alpha/beta hydrolase"/>
    <property type="match status" value="1"/>
</dbReference>
<dbReference type="HAMAP" id="MF_00296">
    <property type="entry name" value="MetX_acyltransf"/>
    <property type="match status" value="1"/>
</dbReference>
<dbReference type="InterPro" id="IPR000073">
    <property type="entry name" value="AB_hydrolase_1"/>
</dbReference>
<dbReference type="InterPro" id="IPR029058">
    <property type="entry name" value="AB_hydrolase_fold"/>
</dbReference>
<dbReference type="InterPro" id="IPR008220">
    <property type="entry name" value="HAT_MetX-like"/>
</dbReference>
<dbReference type="NCBIfam" id="TIGR01392">
    <property type="entry name" value="homoserO_Ac_trn"/>
    <property type="match status" value="1"/>
</dbReference>
<dbReference type="NCBIfam" id="NF001209">
    <property type="entry name" value="PRK00175.1"/>
    <property type="match status" value="1"/>
</dbReference>
<dbReference type="PANTHER" id="PTHR32268">
    <property type="entry name" value="HOMOSERINE O-ACETYLTRANSFERASE"/>
    <property type="match status" value="1"/>
</dbReference>
<dbReference type="PANTHER" id="PTHR32268:SF11">
    <property type="entry name" value="HOMOSERINE O-ACETYLTRANSFERASE"/>
    <property type="match status" value="1"/>
</dbReference>
<dbReference type="Pfam" id="PF00561">
    <property type="entry name" value="Abhydrolase_1"/>
    <property type="match status" value="1"/>
</dbReference>
<dbReference type="PIRSF" id="PIRSF000443">
    <property type="entry name" value="Homoser_Ac_trans"/>
    <property type="match status" value="1"/>
</dbReference>
<dbReference type="PRINTS" id="PR00111">
    <property type="entry name" value="ABHYDROLASE"/>
</dbReference>
<dbReference type="SUPFAM" id="SSF53474">
    <property type="entry name" value="alpha/beta-Hydrolases"/>
    <property type="match status" value="1"/>
</dbReference>
<sequence>MSEIALEAWGEHEALLLKPPRSPLSIPPPKPRTAVLFPRREGFYTELGGYLPEVRLRFETYGTLSRRRDNAVLVFHALTGSAHLAGTYDEETFRSLSPLEQAFGREGWWDSLVGPGRILDPALYYVVSANHLGSCYGSTGPLSLDPRTGRPYGRDFPPLTIRDLARAQARLLDHLGVEKAIVIGGSLGGMVALEFALMYPERVKKLVVLAAPARHGPWARAFNHLSRQAILQDPEYQKGNPAPKGMALARGIAMMSYRAPEGFEARWGAEPELGETYLDYQGEKFLRRFHAESYLVLSRAMDTHDVGRGRGGVEEALKRLRAIPSLFVGIDTDLLYPAWEVRQAAKAAGARYREIKSPHGHDAFLIETDQVEEILDAFLP</sequence>
<accession>Q5SK89</accession>
<evidence type="ECO:0000255" key="1">
    <source>
        <dbReference type="HAMAP-Rule" id="MF_00296"/>
    </source>
</evidence>
<protein>
    <recommendedName>
        <fullName evidence="1">Homoserine O-acetyltransferase</fullName>
        <shortName evidence="1">HAT</shortName>
        <ecNumber evidence="1">2.3.1.31</ecNumber>
    </recommendedName>
    <alternativeName>
        <fullName evidence="1">Homoserine transacetylase</fullName>
        <shortName evidence="1">HTA</shortName>
    </alternativeName>
</protein>
<reference key="1">
    <citation type="submission" date="2004-11" db="EMBL/GenBank/DDBJ databases">
        <title>Complete genome sequence of Thermus thermophilus HB8.</title>
        <authorList>
            <person name="Masui R."/>
            <person name="Kurokawa K."/>
            <person name="Nakagawa N."/>
            <person name="Tokunaga F."/>
            <person name="Koyama Y."/>
            <person name="Shibata T."/>
            <person name="Oshima T."/>
            <person name="Yokoyama S."/>
            <person name="Yasunaga T."/>
            <person name="Kuramitsu S."/>
        </authorList>
    </citation>
    <scope>NUCLEOTIDE SEQUENCE [LARGE SCALE GENOMIC DNA]</scope>
    <source>
        <strain>ATCC 27634 / DSM 579 / HB8</strain>
    </source>
</reference>